<proteinExistence type="inferred from homology"/>
<comment type="function">
    <text evidence="1">Catalyzes the reduction of the glycolytic intermediate dihydroxyacetone phosphate (DHAP) to sn-glycerol 3-phosphate (G3P), the key precursor for phospholipid synthesis.</text>
</comment>
<comment type="catalytic activity">
    <reaction evidence="1">
        <text>sn-glycerol 3-phosphate + NAD(+) = dihydroxyacetone phosphate + NADH + H(+)</text>
        <dbReference type="Rhea" id="RHEA:11092"/>
        <dbReference type="ChEBI" id="CHEBI:15378"/>
        <dbReference type="ChEBI" id="CHEBI:57540"/>
        <dbReference type="ChEBI" id="CHEBI:57597"/>
        <dbReference type="ChEBI" id="CHEBI:57642"/>
        <dbReference type="ChEBI" id="CHEBI:57945"/>
        <dbReference type="EC" id="1.1.1.94"/>
    </reaction>
    <physiologicalReaction direction="right-to-left" evidence="1">
        <dbReference type="Rhea" id="RHEA:11094"/>
    </physiologicalReaction>
</comment>
<comment type="catalytic activity">
    <reaction evidence="1">
        <text>sn-glycerol 3-phosphate + NADP(+) = dihydroxyacetone phosphate + NADPH + H(+)</text>
        <dbReference type="Rhea" id="RHEA:11096"/>
        <dbReference type="ChEBI" id="CHEBI:15378"/>
        <dbReference type="ChEBI" id="CHEBI:57597"/>
        <dbReference type="ChEBI" id="CHEBI:57642"/>
        <dbReference type="ChEBI" id="CHEBI:57783"/>
        <dbReference type="ChEBI" id="CHEBI:58349"/>
        <dbReference type="EC" id="1.1.1.94"/>
    </reaction>
    <physiologicalReaction direction="right-to-left" evidence="1">
        <dbReference type="Rhea" id="RHEA:11098"/>
    </physiologicalReaction>
</comment>
<comment type="pathway">
    <text evidence="1">Membrane lipid metabolism; glycerophospholipid metabolism.</text>
</comment>
<comment type="subcellular location">
    <subcellularLocation>
        <location evidence="1">Cytoplasm</location>
    </subcellularLocation>
</comment>
<comment type="similarity">
    <text evidence="1">Belongs to the NAD-dependent glycerol-3-phosphate dehydrogenase family.</text>
</comment>
<feature type="chain" id="PRO_1000123203" description="Glycerol-3-phosphate dehydrogenase [NAD(P)+]">
    <location>
        <begin position="1"/>
        <end position="341"/>
    </location>
</feature>
<feature type="active site" description="Proton acceptor" evidence="1">
    <location>
        <position position="194"/>
    </location>
</feature>
<feature type="binding site" evidence="1">
    <location>
        <position position="15"/>
    </location>
    <ligand>
        <name>NADPH</name>
        <dbReference type="ChEBI" id="CHEBI:57783"/>
    </ligand>
</feature>
<feature type="binding site" evidence="1">
    <location>
        <position position="16"/>
    </location>
    <ligand>
        <name>NADPH</name>
        <dbReference type="ChEBI" id="CHEBI:57783"/>
    </ligand>
</feature>
<feature type="binding site" evidence="1">
    <location>
        <position position="36"/>
    </location>
    <ligand>
        <name>NADPH</name>
        <dbReference type="ChEBI" id="CHEBI:57783"/>
    </ligand>
</feature>
<feature type="binding site" evidence="1">
    <location>
        <position position="110"/>
    </location>
    <ligand>
        <name>NADPH</name>
        <dbReference type="ChEBI" id="CHEBI:57783"/>
    </ligand>
</feature>
<feature type="binding site" evidence="1">
    <location>
        <position position="110"/>
    </location>
    <ligand>
        <name>sn-glycerol 3-phosphate</name>
        <dbReference type="ChEBI" id="CHEBI:57597"/>
    </ligand>
</feature>
<feature type="binding site" evidence="1">
    <location>
        <position position="139"/>
    </location>
    <ligand>
        <name>sn-glycerol 3-phosphate</name>
        <dbReference type="ChEBI" id="CHEBI:57597"/>
    </ligand>
</feature>
<feature type="binding site" evidence="1">
    <location>
        <position position="141"/>
    </location>
    <ligand>
        <name>sn-glycerol 3-phosphate</name>
        <dbReference type="ChEBI" id="CHEBI:57597"/>
    </ligand>
</feature>
<feature type="binding site" evidence="1">
    <location>
        <position position="143"/>
    </location>
    <ligand>
        <name>NADPH</name>
        <dbReference type="ChEBI" id="CHEBI:57783"/>
    </ligand>
</feature>
<feature type="binding site" evidence="1">
    <location>
        <position position="194"/>
    </location>
    <ligand>
        <name>sn-glycerol 3-phosphate</name>
        <dbReference type="ChEBI" id="CHEBI:57597"/>
    </ligand>
</feature>
<feature type="binding site" evidence="1">
    <location>
        <position position="247"/>
    </location>
    <ligand>
        <name>sn-glycerol 3-phosphate</name>
        <dbReference type="ChEBI" id="CHEBI:57597"/>
    </ligand>
</feature>
<feature type="binding site" evidence="1">
    <location>
        <position position="257"/>
    </location>
    <ligand>
        <name>sn-glycerol 3-phosphate</name>
        <dbReference type="ChEBI" id="CHEBI:57597"/>
    </ligand>
</feature>
<feature type="binding site" evidence="1">
    <location>
        <position position="258"/>
    </location>
    <ligand>
        <name>NADPH</name>
        <dbReference type="ChEBI" id="CHEBI:57783"/>
    </ligand>
</feature>
<feature type="binding site" evidence="1">
    <location>
        <position position="258"/>
    </location>
    <ligand>
        <name>sn-glycerol 3-phosphate</name>
        <dbReference type="ChEBI" id="CHEBI:57597"/>
    </ligand>
</feature>
<feature type="binding site" evidence="1">
    <location>
        <position position="259"/>
    </location>
    <ligand>
        <name>sn-glycerol 3-phosphate</name>
        <dbReference type="ChEBI" id="CHEBI:57597"/>
    </ligand>
</feature>
<feature type="binding site" evidence="1">
    <location>
        <position position="282"/>
    </location>
    <ligand>
        <name>NADPH</name>
        <dbReference type="ChEBI" id="CHEBI:57783"/>
    </ligand>
</feature>
<feature type="binding site" evidence="1">
    <location>
        <position position="284"/>
    </location>
    <ligand>
        <name>NADPH</name>
        <dbReference type="ChEBI" id="CHEBI:57783"/>
    </ligand>
</feature>
<protein>
    <recommendedName>
        <fullName evidence="1">Glycerol-3-phosphate dehydrogenase [NAD(P)+]</fullName>
        <ecNumber evidence="1">1.1.1.94</ecNumber>
    </recommendedName>
    <alternativeName>
        <fullName evidence="1">NAD(P)(+)-dependent glycerol-3-phosphate dehydrogenase</fullName>
    </alternativeName>
    <alternativeName>
        <fullName evidence="1">NAD(P)H-dependent dihydroxyacetone-phosphate reductase</fullName>
    </alternativeName>
</protein>
<reference key="1">
    <citation type="journal article" date="2008" name="J. Biotechnol.">
        <title>The genome of Xanthomonas campestris pv. campestris B100 and its use for the reconstruction of metabolic pathways involved in xanthan biosynthesis.</title>
        <authorList>
            <person name="Vorhoelter F.-J."/>
            <person name="Schneiker S."/>
            <person name="Goesmann A."/>
            <person name="Krause L."/>
            <person name="Bekel T."/>
            <person name="Kaiser O."/>
            <person name="Linke B."/>
            <person name="Patschkowski T."/>
            <person name="Rueckert C."/>
            <person name="Schmid J."/>
            <person name="Sidhu V.K."/>
            <person name="Sieber V."/>
            <person name="Tauch A."/>
            <person name="Watt S.A."/>
            <person name="Weisshaar B."/>
            <person name="Becker A."/>
            <person name="Niehaus K."/>
            <person name="Puehler A."/>
        </authorList>
    </citation>
    <scope>NUCLEOTIDE SEQUENCE [LARGE SCALE GENOMIC DNA]</scope>
    <source>
        <strain>B100</strain>
    </source>
</reference>
<evidence type="ECO:0000255" key="1">
    <source>
        <dbReference type="HAMAP-Rule" id="MF_00394"/>
    </source>
</evidence>
<sequence>MSDPTQKIAVLGAGSWGTALAALVARHGHPTVLWGRDAAMVDAIDRTHENPRYLPGIALPDSLRATTDLQQTIAGASWILVVVPSHAFTETIKLLAPLRPAGAGIAWATKGFEPGSGRFLHEVARDILGPSVPLAVVTGPSFAKEVTLGLPTAITVHGDDAAFAQVVADAMHGPTFRAYTGDDMVGAELGGAMKNVLAVATGVADGMQLGLNARAGLITRGLNEMLRLAAVIGARPETLMGLAGLGDLVLTCTGDLSRNRRLGLALGRGQSLSDAIREIGQVVESVQTADEVMRQAEQHGIELPISNAVRAVLHGEITPEAGLKELLARERKPEYPQTLFT</sequence>
<dbReference type="EC" id="1.1.1.94" evidence="1"/>
<dbReference type="EMBL" id="AM920689">
    <property type="protein sequence ID" value="CAP49556.1"/>
    <property type="molecule type" value="Genomic_DNA"/>
</dbReference>
<dbReference type="SMR" id="B0RLW9"/>
<dbReference type="KEGG" id="xca:xcc-b100_0225"/>
<dbReference type="HOGENOM" id="CLU_033449_0_2_6"/>
<dbReference type="UniPathway" id="UPA00940"/>
<dbReference type="Proteomes" id="UP000001188">
    <property type="component" value="Chromosome"/>
</dbReference>
<dbReference type="GO" id="GO:0005829">
    <property type="term" value="C:cytosol"/>
    <property type="evidence" value="ECO:0007669"/>
    <property type="project" value="TreeGrafter"/>
</dbReference>
<dbReference type="GO" id="GO:0047952">
    <property type="term" value="F:glycerol-3-phosphate dehydrogenase [NAD(P)+] activity"/>
    <property type="evidence" value="ECO:0007669"/>
    <property type="project" value="UniProtKB-UniRule"/>
</dbReference>
<dbReference type="GO" id="GO:0051287">
    <property type="term" value="F:NAD binding"/>
    <property type="evidence" value="ECO:0007669"/>
    <property type="project" value="InterPro"/>
</dbReference>
<dbReference type="GO" id="GO:0005975">
    <property type="term" value="P:carbohydrate metabolic process"/>
    <property type="evidence" value="ECO:0007669"/>
    <property type="project" value="InterPro"/>
</dbReference>
<dbReference type="GO" id="GO:0046167">
    <property type="term" value="P:glycerol-3-phosphate biosynthetic process"/>
    <property type="evidence" value="ECO:0007669"/>
    <property type="project" value="UniProtKB-UniRule"/>
</dbReference>
<dbReference type="GO" id="GO:0046168">
    <property type="term" value="P:glycerol-3-phosphate catabolic process"/>
    <property type="evidence" value="ECO:0007669"/>
    <property type="project" value="InterPro"/>
</dbReference>
<dbReference type="GO" id="GO:0046474">
    <property type="term" value="P:glycerophospholipid biosynthetic process"/>
    <property type="evidence" value="ECO:0007669"/>
    <property type="project" value="TreeGrafter"/>
</dbReference>
<dbReference type="FunFam" id="1.10.1040.10:FF:000001">
    <property type="entry name" value="Glycerol-3-phosphate dehydrogenase [NAD(P)+]"/>
    <property type="match status" value="1"/>
</dbReference>
<dbReference type="FunFam" id="3.40.50.720:FF:000019">
    <property type="entry name" value="Glycerol-3-phosphate dehydrogenase [NAD(P)+]"/>
    <property type="match status" value="1"/>
</dbReference>
<dbReference type="Gene3D" id="1.10.1040.10">
    <property type="entry name" value="N-(1-d-carboxylethyl)-l-norvaline Dehydrogenase, domain 2"/>
    <property type="match status" value="1"/>
</dbReference>
<dbReference type="Gene3D" id="3.40.50.720">
    <property type="entry name" value="NAD(P)-binding Rossmann-like Domain"/>
    <property type="match status" value="1"/>
</dbReference>
<dbReference type="HAMAP" id="MF_00394">
    <property type="entry name" value="NAD_Glyc3P_dehydrog"/>
    <property type="match status" value="1"/>
</dbReference>
<dbReference type="InterPro" id="IPR008927">
    <property type="entry name" value="6-PGluconate_DH-like_C_sf"/>
</dbReference>
<dbReference type="InterPro" id="IPR013328">
    <property type="entry name" value="6PGD_dom2"/>
</dbReference>
<dbReference type="InterPro" id="IPR006168">
    <property type="entry name" value="G3P_DH_NAD-dep"/>
</dbReference>
<dbReference type="InterPro" id="IPR006109">
    <property type="entry name" value="G3P_DH_NAD-dep_C"/>
</dbReference>
<dbReference type="InterPro" id="IPR011128">
    <property type="entry name" value="G3P_DH_NAD-dep_N"/>
</dbReference>
<dbReference type="InterPro" id="IPR036291">
    <property type="entry name" value="NAD(P)-bd_dom_sf"/>
</dbReference>
<dbReference type="NCBIfam" id="NF000940">
    <property type="entry name" value="PRK00094.1-2"/>
    <property type="match status" value="1"/>
</dbReference>
<dbReference type="NCBIfam" id="NF000942">
    <property type="entry name" value="PRK00094.1-4"/>
    <property type="match status" value="1"/>
</dbReference>
<dbReference type="PANTHER" id="PTHR11728">
    <property type="entry name" value="GLYCEROL-3-PHOSPHATE DEHYDROGENASE"/>
    <property type="match status" value="1"/>
</dbReference>
<dbReference type="PANTHER" id="PTHR11728:SF1">
    <property type="entry name" value="GLYCEROL-3-PHOSPHATE DEHYDROGENASE [NAD(+)] 2, CHLOROPLASTIC"/>
    <property type="match status" value="1"/>
</dbReference>
<dbReference type="Pfam" id="PF07479">
    <property type="entry name" value="NAD_Gly3P_dh_C"/>
    <property type="match status" value="1"/>
</dbReference>
<dbReference type="Pfam" id="PF01210">
    <property type="entry name" value="NAD_Gly3P_dh_N"/>
    <property type="match status" value="1"/>
</dbReference>
<dbReference type="PIRSF" id="PIRSF000114">
    <property type="entry name" value="Glycerol-3-P_dh"/>
    <property type="match status" value="1"/>
</dbReference>
<dbReference type="PRINTS" id="PR00077">
    <property type="entry name" value="GPDHDRGNASE"/>
</dbReference>
<dbReference type="SUPFAM" id="SSF48179">
    <property type="entry name" value="6-phosphogluconate dehydrogenase C-terminal domain-like"/>
    <property type="match status" value="1"/>
</dbReference>
<dbReference type="SUPFAM" id="SSF51735">
    <property type="entry name" value="NAD(P)-binding Rossmann-fold domains"/>
    <property type="match status" value="1"/>
</dbReference>
<dbReference type="PROSITE" id="PS00957">
    <property type="entry name" value="NAD_G3PDH"/>
    <property type="match status" value="1"/>
</dbReference>
<gene>
    <name evidence="1" type="primary">gpsA</name>
    <name type="ordered locus">xcc-b100_0225</name>
</gene>
<accession>B0RLW9</accession>
<name>GPDA_XANCB</name>
<organism>
    <name type="scientific">Xanthomonas campestris pv. campestris (strain B100)</name>
    <dbReference type="NCBI Taxonomy" id="509169"/>
    <lineage>
        <taxon>Bacteria</taxon>
        <taxon>Pseudomonadati</taxon>
        <taxon>Pseudomonadota</taxon>
        <taxon>Gammaproteobacteria</taxon>
        <taxon>Lysobacterales</taxon>
        <taxon>Lysobacteraceae</taxon>
        <taxon>Xanthomonas</taxon>
    </lineage>
</organism>
<keyword id="KW-0963">Cytoplasm</keyword>
<keyword id="KW-0444">Lipid biosynthesis</keyword>
<keyword id="KW-0443">Lipid metabolism</keyword>
<keyword id="KW-0520">NAD</keyword>
<keyword id="KW-0521">NADP</keyword>
<keyword id="KW-0547">Nucleotide-binding</keyword>
<keyword id="KW-0560">Oxidoreductase</keyword>
<keyword id="KW-0594">Phospholipid biosynthesis</keyword>
<keyword id="KW-1208">Phospholipid metabolism</keyword>